<gene>
    <name evidence="1" type="primary">rplQ</name>
    <name type="ordered locus">A1E_04245</name>
</gene>
<proteinExistence type="inferred from homology"/>
<protein>
    <recommendedName>
        <fullName evidence="1">Large ribosomal subunit protein bL17</fullName>
    </recommendedName>
    <alternativeName>
        <fullName evidence="2">50S ribosomal protein L17</fullName>
    </alternativeName>
</protein>
<reference key="1">
    <citation type="submission" date="2007-09" db="EMBL/GenBank/DDBJ databases">
        <title>Complete genome sequence of Rickettsia canadensis.</title>
        <authorList>
            <person name="Madan A."/>
            <person name="Fahey J."/>
            <person name="Helton E."/>
            <person name="Ketteman M."/>
            <person name="Madan A."/>
            <person name="Rodrigues S."/>
            <person name="Sanchez A."/>
            <person name="Whiting M."/>
            <person name="Dasch G."/>
            <person name="Eremeeva M."/>
        </authorList>
    </citation>
    <scope>NUCLEOTIDE SEQUENCE [LARGE SCALE GENOMIC DNA]</scope>
    <source>
        <strain>McKiel</strain>
    </source>
</reference>
<sequence length="136" mass="15434">MRHKIKGRKLNVTSSHRQAMLANMAVALISHEQIKTTLPKAKELRSYIETLITKAKKADLAVRRSVLSKIKDKKAVEKLINILGTRYKDRPGGYTRIIKAGFRYGDLAPIAYIEFIDRDVNAKGNIKQDVNEDTKN</sequence>
<name>RL17_RICCK</name>
<evidence type="ECO:0000255" key="1">
    <source>
        <dbReference type="HAMAP-Rule" id="MF_01368"/>
    </source>
</evidence>
<evidence type="ECO:0000305" key="2"/>
<keyword id="KW-0687">Ribonucleoprotein</keyword>
<keyword id="KW-0689">Ribosomal protein</keyword>
<comment type="subunit">
    <text evidence="1">Part of the 50S ribosomal subunit. Contacts protein L32.</text>
</comment>
<comment type="similarity">
    <text evidence="1">Belongs to the bacterial ribosomal protein bL17 family.</text>
</comment>
<dbReference type="EMBL" id="CP000409">
    <property type="protein sequence ID" value="ABV73774.1"/>
    <property type="molecule type" value="Genomic_DNA"/>
</dbReference>
<dbReference type="RefSeq" id="WP_012148969.1">
    <property type="nucleotide sequence ID" value="NC_009879.1"/>
</dbReference>
<dbReference type="SMR" id="A8EZJ1"/>
<dbReference type="STRING" id="293613.A1E_04245"/>
<dbReference type="KEGG" id="rcm:A1E_04245"/>
<dbReference type="eggNOG" id="COG0203">
    <property type="taxonomic scope" value="Bacteria"/>
</dbReference>
<dbReference type="HOGENOM" id="CLU_074407_2_0_5"/>
<dbReference type="Proteomes" id="UP000007056">
    <property type="component" value="Chromosome"/>
</dbReference>
<dbReference type="GO" id="GO:0022625">
    <property type="term" value="C:cytosolic large ribosomal subunit"/>
    <property type="evidence" value="ECO:0007669"/>
    <property type="project" value="TreeGrafter"/>
</dbReference>
<dbReference type="GO" id="GO:0003735">
    <property type="term" value="F:structural constituent of ribosome"/>
    <property type="evidence" value="ECO:0007669"/>
    <property type="project" value="InterPro"/>
</dbReference>
<dbReference type="GO" id="GO:0006412">
    <property type="term" value="P:translation"/>
    <property type="evidence" value="ECO:0007669"/>
    <property type="project" value="UniProtKB-UniRule"/>
</dbReference>
<dbReference type="FunFam" id="3.90.1030.10:FF:000001">
    <property type="entry name" value="50S ribosomal protein L17"/>
    <property type="match status" value="1"/>
</dbReference>
<dbReference type="Gene3D" id="3.90.1030.10">
    <property type="entry name" value="Ribosomal protein L17"/>
    <property type="match status" value="1"/>
</dbReference>
<dbReference type="HAMAP" id="MF_01368">
    <property type="entry name" value="Ribosomal_bL17"/>
    <property type="match status" value="1"/>
</dbReference>
<dbReference type="InterPro" id="IPR000456">
    <property type="entry name" value="Ribosomal_bL17"/>
</dbReference>
<dbReference type="InterPro" id="IPR047859">
    <property type="entry name" value="Ribosomal_bL17_CS"/>
</dbReference>
<dbReference type="InterPro" id="IPR036373">
    <property type="entry name" value="Ribosomal_bL17_sf"/>
</dbReference>
<dbReference type="NCBIfam" id="TIGR00059">
    <property type="entry name" value="L17"/>
    <property type="match status" value="1"/>
</dbReference>
<dbReference type="PANTHER" id="PTHR14413:SF16">
    <property type="entry name" value="LARGE RIBOSOMAL SUBUNIT PROTEIN BL17M"/>
    <property type="match status" value="1"/>
</dbReference>
<dbReference type="PANTHER" id="PTHR14413">
    <property type="entry name" value="RIBOSOMAL PROTEIN L17"/>
    <property type="match status" value="1"/>
</dbReference>
<dbReference type="Pfam" id="PF01196">
    <property type="entry name" value="Ribosomal_L17"/>
    <property type="match status" value="1"/>
</dbReference>
<dbReference type="SUPFAM" id="SSF64263">
    <property type="entry name" value="Prokaryotic ribosomal protein L17"/>
    <property type="match status" value="1"/>
</dbReference>
<dbReference type="PROSITE" id="PS01167">
    <property type="entry name" value="RIBOSOMAL_L17"/>
    <property type="match status" value="1"/>
</dbReference>
<feature type="chain" id="PRO_1000055931" description="Large ribosomal subunit protein bL17">
    <location>
        <begin position="1"/>
        <end position="136"/>
    </location>
</feature>
<organism>
    <name type="scientific">Rickettsia canadensis (strain McKiel)</name>
    <dbReference type="NCBI Taxonomy" id="293613"/>
    <lineage>
        <taxon>Bacteria</taxon>
        <taxon>Pseudomonadati</taxon>
        <taxon>Pseudomonadota</taxon>
        <taxon>Alphaproteobacteria</taxon>
        <taxon>Rickettsiales</taxon>
        <taxon>Rickettsiaceae</taxon>
        <taxon>Rickettsieae</taxon>
        <taxon>Rickettsia</taxon>
        <taxon>belli group</taxon>
    </lineage>
</organism>
<accession>A8EZJ1</accession>